<evidence type="ECO:0000255" key="1">
    <source>
        <dbReference type="HAMAP-Rule" id="MF_01299"/>
    </source>
</evidence>
<evidence type="ECO:0000305" key="2"/>
<reference key="1">
    <citation type="journal article" date="2006" name="Nat. Biotechnol.">
        <title>Complete genome sequence of the entomopathogenic and metabolically versatile soil bacterium Pseudomonas entomophila.</title>
        <authorList>
            <person name="Vodovar N."/>
            <person name="Vallenet D."/>
            <person name="Cruveiller S."/>
            <person name="Rouy Z."/>
            <person name="Barbe V."/>
            <person name="Acosta C."/>
            <person name="Cattolico L."/>
            <person name="Jubin C."/>
            <person name="Lajus A."/>
            <person name="Segurens B."/>
            <person name="Vacherie B."/>
            <person name="Wincker P."/>
            <person name="Weissenbach J."/>
            <person name="Lemaitre B."/>
            <person name="Medigue C."/>
            <person name="Boccard F."/>
        </authorList>
    </citation>
    <scope>NUCLEOTIDE SEQUENCE [LARGE SCALE GENOMIC DNA]</scope>
    <source>
        <strain>L48</strain>
    </source>
</reference>
<dbReference type="EC" id="4.1.1.112" evidence="1"/>
<dbReference type="EMBL" id="CT573326">
    <property type="protein sequence ID" value="CAK17042.1"/>
    <property type="molecule type" value="Genomic_DNA"/>
</dbReference>
<dbReference type="RefSeq" id="WP_011535413.1">
    <property type="nucleotide sequence ID" value="NC_008027.1"/>
</dbReference>
<dbReference type="SMR" id="Q1I5P3"/>
<dbReference type="STRING" id="384676.PSEEN4356"/>
<dbReference type="GeneID" id="32807357"/>
<dbReference type="KEGG" id="pen:PSEEN4356"/>
<dbReference type="eggNOG" id="COG2513">
    <property type="taxonomic scope" value="Bacteria"/>
</dbReference>
<dbReference type="HOGENOM" id="CLU_027389_3_2_6"/>
<dbReference type="OrthoDB" id="9771433at2"/>
<dbReference type="Proteomes" id="UP000000658">
    <property type="component" value="Chromosome"/>
</dbReference>
<dbReference type="GO" id="GO:0000287">
    <property type="term" value="F:magnesium ion binding"/>
    <property type="evidence" value="ECO:0007669"/>
    <property type="project" value="UniProtKB-UniRule"/>
</dbReference>
<dbReference type="GO" id="GO:0046421">
    <property type="term" value="F:methylisocitrate lyase activity"/>
    <property type="evidence" value="ECO:0007669"/>
    <property type="project" value="TreeGrafter"/>
</dbReference>
<dbReference type="GO" id="GO:0008948">
    <property type="term" value="F:oxaloacetate decarboxylase activity"/>
    <property type="evidence" value="ECO:0007669"/>
    <property type="project" value="UniProtKB-UniRule"/>
</dbReference>
<dbReference type="GO" id="GO:0006107">
    <property type="term" value="P:oxaloacetate metabolic process"/>
    <property type="evidence" value="ECO:0007669"/>
    <property type="project" value="UniProtKB-UniRule"/>
</dbReference>
<dbReference type="GO" id="GO:0019629">
    <property type="term" value="P:propionate catabolic process, 2-methylcitrate cycle"/>
    <property type="evidence" value="ECO:0007669"/>
    <property type="project" value="TreeGrafter"/>
</dbReference>
<dbReference type="GO" id="GO:0042866">
    <property type="term" value="P:pyruvate biosynthetic process"/>
    <property type="evidence" value="ECO:0007669"/>
    <property type="project" value="UniProtKB-UniRule"/>
</dbReference>
<dbReference type="CDD" id="cd00377">
    <property type="entry name" value="ICL_PEPM"/>
    <property type="match status" value="1"/>
</dbReference>
<dbReference type="Gene3D" id="3.20.20.60">
    <property type="entry name" value="Phosphoenolpyruvate-binding domains"/>
    <property type="match status" value="1"/>
</dbReference>
<dbReference type="HAMAP" id="MF_01299">
    <property type="entry name" value="OadC"/>
    <property type="match status" value="1"/>
</dbReference>
<dbReference type="InterPro" id="IPR039556">
    <property type="entry name" value="ICL/PEPM"/>
</dbReference>
<dbReference type="InterPro" id="IPR023687">
    <property type="entry name" value="Oxaloacetate_deCOase_bac"/>
</dbReference>
<dbReference type="InterPro" id="IPR015813">
    <property type="entry name" value="Pyrv/PenolPyrv_kinase-like_dom"/>
</dbReference>
<dbReference type="InterPro" id="IPR040442">
    <property type="entry name" value="Pyrv_kinase-like_dom_sf"/>
</dbReference>
<dbReference type="PANTHER" id="PTHR42905:SF3">
    <property type="entry name" value="OXALOACETATE DECARBOXYLASE"/>
    <property type="match status" value="1"/>
</dbReference>
<dbReference type="PANTHER" id="PTHR42905">
    <property type="entry name" value="PHOSPHOENOLPYRUVATE CARBOXYLASE"/>
    <property type="match status" value="1"/>
</dbReference>
<dbReference type="Pfam" id="PF13714">
    <property type="entry name" value="PEP_mutase"/>
    <property type="match status" value="1"/>
</dbReference>
<dbReference type="SUPFAM" id="SSF51621">
    <property type="entry name" value="Phosphoenolpyruvate/pyruvate domain"/>
    <property type="match status" value="1"/>
</dbReference>
<gene>
    <name type="ordered locus">PSEEN4356</name>
</gene>
<sequence length="289" mass="31460">MPKASHHDLRFAFRELLASGSCYHTASVFDPMSARIAADLGFEVGILGGSVASLQVLAAPDFALITLSEFVEQATRIGRVAQLPVLADADHGYGNALNVMRTVIELERAGVAGLTIEDTLLPAQFGRKSTDLISVEEGVGKIRAALEARVDSALAIIARTNAGVLTTEEIIVRTQSYQKAGADGICMVGVKDFDQLEQIAEHLSVPLMLVTYANPNLRDDERLARLGVRVVVDGHAAYFAAIKATYDCLRLQRGLQHKSDSLNATELSHTYTQPEDYIRWAKEYMSVEE</sequence>
<comment type="function">
    <text evidence="1">Catalyzes the decarboxylation of oxaloacetate into pyruvate. Seems to play a role in maintaining cellular concentrations of bicarbonate and pyruvate.</text>
</comment>
<comment type="catalytic activity">
    <reaction evidence="1">
        <text>oxaloacetate + H(+) = pyruvate + CO2</text>
        <dbReference type="Rhea" id="RHEA:15641"/>
        <dbReference type="ChEBI" id="CHEBI:15361"/>
        <dbReference type="ChEBI" id="CHEBI:15378"/>
        <dbReference type="ChEBI" id="CHEBI:16452"/>
        <dbReference type="ChEBI" id="CHEBI:16526"/>
        <dbReference type="EC" id="4.1.1.112"/>
    </reaction>
</comment>
<comment type="cofactor">
    <cofactor evidence="1">
        <name>Mg(2+)</name>
        <dbReference type="ChEBI" id="CHEBI:18420"/>
    </cofactor>
    <text evidence="1">Binds 1 Mg(2+) ion per subunit.</text>
</comment>
<comment type="subunit">
    <text evidence="1">Homotetramer; dimer of dimers.</text>
</comment>
<comment type="similarity">
    <text evidence="2">Belongs to the isocitrate lyase/PEP mutase superfamily. Oxaloacetate decarboxylase family.</text>
</comment>
<feature type="chain" id="PRO_0000364061" description="Oxaloacetate decarboxylase">
    <location>
        <begin position="1"/>
        <end position="289"/>
    </location>
</feature>
<feature type="binding site" evidence="1">
    <location>
        <position position="50"/>
    </location>
    <ligand>
        <name>substrate</name>
    </ligand>
</feature>
<feature type="binding site" evidence="1">
    <location>
        <position position="88"/>
    </location>
    <ligand>
        <name>Mg(2+)</name>
        <dbReference type="ChEBI" id="CHEBI:18420"/>
    </ligand>
</feature>
<feature type="binding site" evidence="1">
    <location>
        <position position="159"/>
    </location>
    <ligand>
        <name>substrate</name>
    </ligand>
</feature>
<feature type="binding site" evidence="1">
    <location>
        <position position="235"/>
    </location>
    <ligand>
        <name>substrate</name>
    </ligand>
</feature>
<protein>
    <recommendedName>
        <fullName evidence="1">Oxaloacetate decarboxylase</fullName>
        <ecNumber evidence="1">4.1.1.112</ecNumber>
    </recommendedName>
</protein>
<organism>
    <name type="scientific">Pseudomonas entomophila (strain L48)</name>
    <dbReference type="NCBI Taxonomy" id="384676"/>
    <lineage>
        <taxon>Bacteria</taxon>
        <taxon>Pseudomonadati</taxon>
        <taxon>Pseudomonadota</taxon>
        <taxon>Gammaproteobacteria</taxon>
        <taxon>Pseudomonadales</taxon>
        <taxon>Pseudomonadaceae</taxon>
        <taxon>Pseudomonas</taxon>
    </lineage>
</organism>
<keyword id="KW-0210">Decarboxylase</keyword>
<keyword id="KW-0456">Lyase</keyword>
<keyword id="KW-0460">Magnesium</keyword>
<keyword id="KW-0479">Metal-binding</keyword>
<proteinExistence type="inferred from homology"/>
<name>OADC_PSEE4</name>
<accession>Q1I5P3</accession>